<name>PGK_RUEST</name>
<reference key="1">
    <citation type="submission" date="2006-05" db="EMBL/GenBank/DDBJ databases">
        <title>Complete sequence of chromosome of Silicibacter sp. TM1040.</title>
        <authorList>
            <consortium name="US DOE Joint Genome Institute"/>
            <person name="Copeland A."/>
            <person name="Lucas S."/>
            <person name="Lapidus A."/>
            <person name="Barry K."/>
            <person name="Detter J.C."/>
            <person name="Glavina del Rio T."/>
            <person name="Hammon N."/>
            <person name="Israni S."/>
            <person name="Dalin E."/>
            <person name="Tice H."/>
            <person name="Pitluck S."/>
            <person name="Brettin T."/>
            <person name="Bruce D."/>
            <person name="Han C."/>
            <person name="Tapia R."/>
            <person name="Goodwin L."/>
            <person name="Thompson L.S."/>
            <person name="Gilna P."/>
            <person name="Schmutz J."/>
            <person name="Larimer F."/>
            <person name="Land M."/>
            <person name="Hauser L."/>
            <person name="Kyrpides N."/>
            <person name="Kim E."/>
            <person name="Belas R."/>
            <person name="Moran M.A."/>
            <person name="Buchan A."/>
            <person name="Gonzalez J.M."/>
            <person name="Schell M.A."/>
            <person name="Sun F."/>
            <person name="Richardson P."/>
        </authorList>
    </citation>
    <scope>NUCLEOTIDE SEQUENCE [LARGE SCALE GENOMIC DNA]</scope>
    <source>
        <strain>TM1040</strain>
    </source>
</reference>
<accession>Q1GHP9</accession>
<comment type="catalytic activity">
    <reaction evidence="1">
        <text>(2R)-3-phosphoglycerate + ATP = (2R)-3-phospho-glyceroyl phosphate + ADP</text>
        <dbReference type="Rhea" id="RHEA:14801"/>
        <dbReference type="ChEBI" id="CHEBI:30616"/>
        <dbReference type="ChEBI" id="CHEBI:57604"/>
        <dbReference type="ChEBI" id="CHEBI:58272"/>
        <dbReference type="ChEBI" id="CHEBI:456216"/>
        <dbReference type="EC" id="2.7.2.3"/>
    </reaction>
</comment>
<comment type="pathway">
    <text evidence="1">Carbohydrate degradation; glycolysis; pyruvate from D-glyceraldehyde 3-phosphate: step 2/5.</text>
</comment>
<comment type="subunit">
    <text evidence="1">Monomer.</text>
</comment>
<comment type="subcellular location">
    <subcellularLocation>
        <location evidence="1">Cytoplasm</location>
    </subcellularLocation>
</comment>
<comment type="similarity">
    <text evidence="1">Belongs to the phosphoglycerate kinase family.</text>
</comment>
<organism>
    <name type="scientific">Ruegeria sp. (strain TM1040)</name>
    <name type="common">Silicibacter sp.</name>
    <dbReference type="NCBI Taxonomy" id="292414"/>
    <lineage>
        <taxon>Bacteria</taxon>
        <taxon>Pseudomonadati</taxon>
        <taxon>Pseudomonadota</taxon>
        <taxon>Alphaproteobacteria</taxon>
        <taxon>Rhodobacterales</taxon>
        <taxon>Roseobacteraceae</taxon>
        <taxon>Ruegeria</taxon>
    </lineage>
</organism>
<evidence type="ECO:0000255" key="1">
    <source>
        <dbReference type="HAMAP-Rule" id="MF_00145"/>
    </source>
</evidence>
<gene>
    <name evidence="1" type="primary">pgk</name>
    <name type="ordered locus">TM1040_1084</name>
</gene>
<sequence>MGWKTLDDMDLQGKSVLTRVDINVPMEDGKVTDDTRIRRLVPTISDLLSKGAKPVLLAHFGRPKGKVVPEMSLQPLVPALEAAFGAPVMFVADCRGPAAKGAVDALAPGQILLLENTRFYPGEEQNDADLAKEMAALGDIYCNDAFSAAHRAHASTEALARLLPACAGRLMEAELKALEGSLATPERPVTAVVGGAKVSTKLDLLGNLVAKVDTLVIGGGMANTFLAAQGIDVGKSLCEHDMTGTAKDIMARAEAAGCTILLPSDVVVAREFKAGADNETVPADACPADAMILDAGPASVAAISTVFAESKTLIWNGPLGAFEIAPFDIATNTAAQKAAELTKAGQLISVAGGGDTVAALNQAGAAEAFSYISTAGGAFLEWMEGKVLPGVAALQT</sequence>
<feature type="chain" id="PRO_1000058069" description="Phosphoglycerate kinase">
    <location>
        <begin position="1"/>
        <end position="396"/>
    </location>
</feature>
<feature type="binding site" evidence="1">
    <location>
        <begin position="21"/>
        <end position="23"/>
    </location>
    <ligand>
        <name>substrate</name>
    </ligand>
</feature>
<feature type="binding site" evidence="1">
    <location>
        <position position="36"/>
    </location>
    <ligand>
        <name>substrate</name>
    </ligand>
</feature>
<feature type="binding site" evidence="1">
    <location>
        <begin position="59"/>
        <end position="62"/>
    </location>
    <ligand>
        <name>substrate</name>
    </ligand>
</feature>
<feature type="binding site" evidence="1">
    <location>
        <position position="118"/>
    </location>
    <ligand>
        <name>substrate</name>
    </ligand>
</feature>
<feature type="binding site" evidence="1">
    <location>
        <position position="151"/>
    </location>
    <ligand>
        <name>substrate</name>
    </ligand>
</feature>
<feature type="binding site" evidence="1">
    <location>
        <position position="201"/>
    </location>
    <ligand>
        <name>ATP</name>
        <dbReference type="ChEBI" id="CHEBI:30616"/>
    </ligand>
</feature>
<feature type="binding site" evidence="1">
    <location>
        <position position="323"/>
    </location>
    <ligand>
        <name>ATP</name>
        <dbReference type="ChEBI" id="CHEBI:30616"/>
    </ligand>
</feature>
<feature type="binding site" evidence="1">
    <location>
        <begin position="353"/>
        <end position="356"/>
    </location>
    <ligand>
        <name>ATP</name>
        <dbReference type="ChEBI" id="CHEBI:30616"/>
    </ligand>
</feature>
<keyword id="KW-0067">ATP-binding</keyword>
<keyword id="KW-0963">Cytoplasm</keyword>
<keyword id="KW-0324">Glycolysis</keyword>
<keyword id="KW-0418">Kinase</keyword>
<keyword id="KW-0547">Nucleotide-binding</keyword>
<keyword id="KW-1185">Reference proteome</keyword>
<keyword id="KW-0808">Transferase</keyword>
<protein>
    <recommendedName>
        <fullName evidence="1">Phosphoglycerate kinase</fullName>
        <ecNumber evidence="1">2.7.2.3</ecNumber>
    </recommendedName>
</protein>
<proteinExistence type="inferred from homology"/>
<dbReference type="EC" id="2.7.2.3" evidence="1"/>
<dbReference type="EMBL" id="CP000377">
    <property type="protein sequence ID" value="ABF63817.1"/>
    <property type="molecule type" value="Genomic_DNA"/>
</dbReference>
<dbReference type="RefSeq" id="WP_011538424.1">
    <property type="nucleotide sequence ID" value="NC_008044.1"/>
</dbReference>
<dbReference type="SMR" id="Q1GHP9"/>
<dbReference type="STRING" id="292414.TM1040_1084"/>
<dbReference type="KEGG" id="sit:TM1040_1084"/>
<dbReference type="eggNOG" id="COG0126">
    <property type="taxonomic scope" value="Bacteria"/>
</dbReference>
<dbReference type="HOGENOM" id="CLU_025427_0_2_5"/>
<dbReference type="OrthoDB" id="9808460at2"/>
<dbReference type="UniPathway" id="UPA00109">
    <property type="reaction ID" value="UER00185"/>
</dbReference>
<dbReference type="Proteomes" id="UP000000636">
    <property type="component" value="Chromosome"/>
</dbReference>
<dbReference type="GO" id="GO:0005829">
    <property type="term" value="C:cytosol"/>
    <property type="evidence" value="ECO:0007669"/>
    <property type="project" value="TreeGrafter"/>
</dbReference>
<dbReference type="GO" id="GO:0043531">
    <property type="term" value="F:ADP binding"/>
    <property type="evidence" value="ECO:0007669"/>
    <property type="project" value="TreeGrafter"/>
</dbReference>
<dbReference type="GO" id="GO:0005524">
    <property type="term" value="F:ATP binding"/>
    <property type="evidence" value="ECO:0007669"/>
    <property type="project" value="UniProtKB-KW"/>
</dbReference>
<dbReference type="GO" id="GO:0004618">
    <property type="term" value="F:phosphoglycerate kinase activity"/>
    <property type="evidence" value="ECO:0007669"/>
    <property type="project" value="UniProtKB-UniRule"/>
</dbReference>
<dbReference type="GO" id="GO:0006094">
    <property type="term" value="P:gluconeogenesis"/>
    <property type="evidence" value="ECO:0007669"/>
    <property type="project" value="TreeGrafter"/>
</dbReference>
<dbReference type="GO" id="GO:0006096">
    <property type="term" value="P:glycolytic process"/>
    <property type="evidence" value="ECO:0007669"/>
    <property type="project" value="UniProtKB-UniRule"/>
</dbReference>
<dbReference type="CDD" id="cd00318">
    <property type="entry name" value="Phosphoglycerate_kinase"/>
    <property type="match status" value="1"/>
</dbReference>
<dbReference type="FunFam" id="3.40.50.1260:FF:000006">
    <property type="entry name" value="Phosphoglycerate kinase"/>
    <property type="match status" value="1"/>
</dbReference>
<dbReference type="FunFam" id="3.40.50.1260:FF:000031">
    <property type="entry name" value="Phosphoglycerate kinase 1"/>
    <property type="match status" value="1"/>
</dbReference>
<dbReference type="Gene3D" id="3.40.50.1260">
    <property type="entry name" value="Phosphoglycerate kinase, N-terminal domain"/>
    <property type="match status" value="2"/>
</dbReference>
<dbReference type="HAMAP" id="MF_00145">
    <property type="entry name" value="Phosphoglyc_kinase"/>
    <property type="match status" value="1"/>
</dbReference>
<dbReference type="InterPro" id="IPR001576">
    <property type="entry name" value="Phosphoglycerate_kinase"/>
</dbReference>
<dbReference type="InterPro" id="IPR015824">
    <property type="entry name" value="Phosphoglycerate_kinase_N"/>
</dbReference>
<dbReference type="InterPro" id="IPR036043">
    <property type="entry name" value="Phosphoglycerate_kinase_sf"/>
</dbReference>
<dbReference type="PANTHER" id="PTHR11406">
    <property type="entry name" value="PHOSPHOGLYCERATE KINASE"/>
    <property type="match status" value="1"/>
</dbReference>
<dbReference type="PANTHER" id="PTHR11406:SF23">
    <property type="entry name" value="PHOSPHOGLYCERATE KINASE 1, CHLOROPLASTIC-RELATED"/>
    <property type="match status" value="1"/>
</dbReference>
<dbReference type="Pfam" id="PF00162">
    <property type="entry name" value="PGK"/>
    <property type="match status" value="1"/>
</dbReference>
<dbReference type="PIRSF" id="PIRSF000724">
    <property type="entry name" value="Pgk"/>
    <property type="match status" value="1"/>
</dbReference>
<dbReference type="PRINTS" id="PR00477">
    <property type="entry name" value="PHGLYCKINASE"/>
</dbReference>
<dbReference type="SUPFAM" id="SSF53748">
    <property type="entry name" value="Phosphoglycerate kinase"/>
    <property type="match status" value="1"/>
</dbReference>